<keyword id="KW-0175">Coiled coil</keyword>
<keyword id="KW-0539">Nucleus</keyword>
<keyword id="KW-1185">Reference proteome</keyword>
<keyword id="KW-0690">Ribosome biogenesis</keyword>
<keyword id="KW-0698">rRNA processing</keyword>
<proteinExistence type="inferred from homology"/>
<reference key="1">
    <citation type="journal article" date="2002" name="Nature">
        <title>Genome sequence and comparative analysis of the model rodent malaria parasite Plasmodium yoelii yoelii.</title>
        <authorList>
            <person name="Carlton J.M."/>
            <person name="Angiuoli S.V."/>
            <person name="Suh B.B."/>
            <person name="Kooij T.W."/>
            <person name="Pertea M."/>
            <person name="Silva J.C."/>
            <person name="Ermolaeva M.D."/>
            <person name="Allen J.E."/>
            <person name="Selengut J.D."/>
            <person name="Koo H.L."/>
            <person name="Peterson J.D."/>
            <person name="Pop M."/>
            <person name="Kosack D.S."/>
            <person name="Shumway M.F."/>
            <person name="Bidwell S.L."/>
            <person name="Shallom S.J."/>
            <person name="van Aken S.E."/>
            <person name="Riedmuller S.B."/>
            <person name="Feldblyum T.V."/>
            <person name="Cho J.K."/>
            <person name="Quackenbush J."/>
            <person name="Sedegah M."/>
            <person name="Shoaibi A."/>
            <person name="Cummings L.M."/>
            <person name="Florens L."/>
            <person name="Yates J.R. III"/>
            <person name="Raine J.D."/>
            <person name="Sinden R.E."/>
            <person name="Harris M.A."/>
            <person name="Cunningham D.A."/>
            <person name="Preiser P.R."/>
            <person name="Bergman L.W."/>
            <person name="Vaidya A.B."/>
            <person name="van Lin L.H."/>
            <person name="Janse C.J."/>
            <person name="Waters A.P."/>
            <person name="Smith H.O."/>
            <person name="White O.R."/>
            <person name="Salzberg S.L."/>
            <person name="Venter J.C."/>
            <person name="Fraser C.M."/>
            <person name="Hoffman S.L."/>
            <person name="Gardner M.J."/>
            <person name="Carucci D.J."/>
        </authorList>
    </citation>
    <scope>NUCLEOTIDE SEQUENCE [LARGE SCALE GENOMIC DNA]</scope>
    <source>
        <strain>17XNL</strain>
    </source>
</reference>
<gene>
    <name type="ORF">PY07549</name>
</gene>
<accession>Q7R7N4</accession>
<dbReference type="EMBL" id="AABL01002800">
    <property type="protein sequence ID" value="EAA20037.1"/>
    <property type="molecule type" value="Genomic_DNA"/>
</dbReference>
<dbReference type="FunCoup" id="Q7R7N4">
    <property type="interactions" value="615"/>
</dbReference>
<dbReference type="STRING" id="73239.Q7R7N4"/>
<dbReference type="PaxDb" id="73239-Q7R7N4"/>
<dbReference type="EnsemblProtists" id="EAA20037">
    <property type="protein sequence ID" value="EAA20037"/>
    <property type="gene ID" value="EAA20037"/>
</dbReference>
<dbReference type="InParanoid" id="Q7R7N4"/>
<dbReference type="Proteomes" id="UP000008553">
    <property type="component" value="Unassembled WGS sequence"/>
</dbReference>
<dbReference type="GO" id="GO:0005654">
    <property type="term" value="C:nucleoplasm"/>
    <property type="evidence" value="ECO:0007669"/>
    <property type="project" value="UniProtKB-SubCell"/>
</dbReference>
<dbReference type="GO" id="GO:0070545">
    <property type="term" value="C:PeBoW complex"/>
    <property type="evidence" value="ECO:0007669"/>
    <property type="project" value="TreeGrafter"/>
</dbReference>
<dbReference type="GO" id="GO:0030687">
    <property type="term" value="C:preribosome, large subunit precursor"/>
    <property type="evidence" value="ECO:0007669"/>
    <property type="project" value="UniProtKB-UniRule"/>
</dbReference>
<dbReference type="GO" id="GO:0043021">
    <property type="term" value="F:ribonucleoprotein complex binding"/>
    <property type="evidence" value="ECO:0007669"/>
    <property type="project" value="UniProtKB-UniRule"/>
</dbReference>
<dbReference type="GO" id="GO:0003723">
    <property type="term" value="F:RNA binding"/>
    <property type="evidence" value="ECO:0007669"/>
    <property type="project" value="TreeGrafter"/>
</dbReference>
<dbReference type="GO" id="GO:0000466">
    <property type="term" value="P:maturation of 5.8S rRNA from tricistronic rRNA transcript (SSU-rRNA, 5.8S rRNA, LSU-rRNA)"/>
    <property type="evidence" value="ECO:0007669"/>
    <property type="project" value="UniProtKB-UniRule"/>
</dbReference>
<dbReference type="GO" id="GO:0000463">
    <property type="term" value="P:maturation of LSU-rRNA from tricistronic rRNA transcript (SSU-rRNA, 5.8S rRNA, LSU-rRNA)"/>
    <property type="evidence" value="ECO:0007669"/>
    <property type="project" value="UniProtKB-UniRule"/>
</dbReference>
<dbReference type="CDD" id="cd17709">
    <property type="entry name" value="BRCT_pescadillo_like"/>
    <property type="match status" value="1"/>
</dbReference>
<dbReference type="Gene3D" id="3.40.50.10190">
    <property type="entry name" value="BRCT domain"/>
    <property type="match status" value="1"/>
</dbReference>
<dbReference type="HAMAP" id="MF_03028">
    <property type="entry name" value="Pescadillo"/>
    <property type="match status" value="1"/>
</dbReference>
<dbReference type="InterPro" id="IPR001357">
    <property type="entry name" value="BRCT_dom"/>
</dbReference>
<dbReference type="InterPro" id="IPR036420">
    <property type="entry name" value="BRCT_dom_sf"/>
</dbReference>
<dbReference type="InterPro" id="IPR010613">
    <property type="entry name" value="PES"/>
</dbReference>
<dbReference type="PANTHER" id="PTHR12221">
    <property type="entry name" value="PESCADILLO - RELATED"/>
    <property type="match status" value="1"/>
</dbReference>
<dbReference type="PANTHER" id="PTHR12221:SF6">
    <property type="entry name" value="PESCADILLO HOMOLOG"/>
    <property type="match status" value="1"/>
</dbReference>
<dbReference type="Pfam" id="PF16589">
    <property type="entry name" value="BRCT_2"/>
    <property type="match status" value="1"/>
</dbReference>
<dbReference type="Pfam" id="PF06732">
    <property type="entry name" value="Pescadillo_N"/>
    <property type="match status" value="1"/>
</dbReference>
<dbReference type="SUPFAM" id="SSF52113">
    <property type="entry name" value="BRCT domain"/>
    <property type="match status" value="1"/>
</dbReference>
<dbReference type="PROSITE" id="PS50172">
    <property type="entry name" value="BRCT"/>
    <property type="match status" value="1"/>
</dbReference>
<name>PESC_PLAYO</name>
<evidence type="ECO:0000255" key="1">
    <source>
        <dbReference type="HAMAP-Rule" id="MF_03028"/>
    </source>
</evidence>
<evidence type="ECO:0000256" key="2">
    <source>
        <dbReference type="SAM" id="MobiDB-lite"/>
    </source>
</evidence>
<feature type="chain" id="PRO_0000370474" description="Pescadillo homolog">
    <location>
        <begin position="1"/>
        <end position="613"/>
    </location>
</feature>
<feature type="domain" description="BRCT" evidence="1">
    <location>
        <begin position="350"/>
        <end position="453"/>
    </location>
</feature>
<feature type="region of interest" description="Disordered" evidence="2">
    <location>
        <begin position="268"/>
        <end position="333"/>
    </location>
</feature>
<feature type="region of interest" description="Disordered" evidence="2">
    <location>
        <begin position="485"/>
        <end position="517"/>
    </location>
</feature>
<feature type="coiled-coil region" evidence="1">
    <location>
        <begin position="259"/>
        <end position="344"/>
    </location>
</feature>
<feature type="coiled-coil region" evidence="1">
    <location>
        <begin position="492"/>
        <end position="601"/>
    </location>
</feature>
<feature type="compositionally biased region" description="Basic and acidic residues" evidence="2">
    <location>
        <begin position="278"/>
        <end position="333"/>
    </location>
</feature>
<feature type="compositionally biased region" description="Low complexity" evidence="2">
    <location>
        <begin position="497"/>
        <end position="511"/>
    </location>
</feature>
<organism>
    <name type="scientific">Plasmodium yoelii yoelii</name>
    <dbReference type="NCBI Taxonomy" id="73239"/>
    <lineage>
        <taxon>Eukaryota</taxon>
        <taxon>Sar</taxon>
        <taxon>Alveolata</taxon>
        <taxon>Apicomplexa</taxon>
        <taxon>Aconoidasida</taxon>
        <taxon>Haemosporida</taxon>
        <taxon>Plasmodiidae</taxon>
        <taxon>Plasmodium</taxon>
        <taxon>Plasmodium (Vinckeia)</taxon>
    </lineage>
</organism>
<protein>
    <recommendedName>
        <fullName evidence="1">Pescadillo homolog</fullName>
    </recommendedName>
</protein>
<sequence>MHIHKLKAKIKKKHQEKYLTKKKIQKKLFLNESEFRRLCIFKGIYPKDYKDIPLKFRNKFYKNKVYYTRNDYKKLSNEKIIQDFRKIKTSLKRYKKYKITLEDNERCKNIIKNFPKYKLDHIIKERFPILVYAVEQLNDALTAIIAYSFLPSNENIGIKNNLINQSIILRNHVKGYYLQAEILQKKITWLIPHIFTPYFDKSIDFKIITNFIEYYVTLLRFILYKLYRLDGMSYPPKEYKDLKNEKLNHLSFDKNYITKELSNELETKESTEDNIIEENEKKTKNGKTENCEKNDQENEKKTKNDKTKNCEKNDQKNDQKNDQKNDQKNDQKNEMKQIEHDIIXNDNTKSVKNLFKNHIFYIHSNMPFDVLSIIILSCGGTICWNSLYSPYKYDDKSITHEILEVSEENKNTQDSNKINNINEYTYKRSFIQPQYIFDCLNSNMILSCEDYNINKTLPVHLSPFIDDDNYKDLVKKDEYTINKMLSEDPQYNKSIQKNKTNSENKXNNYNDNENDMSEDEYNNAIRQKLRNDALNNQMEAENENNYNPQNDLKQENDLLNVQKINNQENIKRNKLALSKKKRKLYNKIEQAENRQKLTIEKFIKKSKNKKKQK</sequence>
<comment type="function">
    <text evidence="1">Required for maturation of ribosomal RNAs and formation of the large ribosomal subunit.</text>
</comment>
<comment type="subcellular location">
    <subcellularLocation>
        <location evidence="1">Nucleus</location>
        <location evidence="1">Nucleolus</location>
    </subcellularLocation>
    <subcellularLocation>
        <location evidence="1">Nucleus</location>
        <location evidence="1">Nucleoplasm</location>
    </subcellularLocation>
</comment>
<comment type="similarity">
    <text evidence="1">Belongs to the pescadillo family.</text>
</comment>